<name>PRR29_HUMAN</name>
<reference key="1">
    <citation type="journal article" date="2004" name="Nat. Genet.">
        <title>Complete sequencing and characterization of 21,243 full-length human cDNAs.</title>
        <authorList>
            <person name="Ota T."/>
            <person name="Suzuki Y."/>
            <person name="Nishikawa T."/>
            <person name="Otsuki T."/>
            <person name="Sugiyama T."/>
            <person name="Irie R."/>
            <person name="Wakamatsu A."/>
            <person name="Hayashi K."/>
            <person name="Sato H."/>
            <person name="Nagai K."/>
            <person name="Kimura K."/>
            <person name="Makita H."/>
            <person name="Sekine M."/>
            <person name="Obayashi M."/>
            <person name="Nishi T."/>
            <person name="Shibahara T."/>
            <person name="Tanaka T."/>
            <person name="Ishii S."/>
            <person name="Yamamoto J."/>
            <person name="Saito K."/>
            <person name="Kawai Y."/>
            <person name="Isono Y."/>
            <person name="Nakamura Y."/>
            <person name="Nagahari K."/>
            <person name="Murakami K."/>
            <person name="Yasuda T."/>
            <person name="Iwayanagi T."/>
            <person name="Wagatsuma M."/>
            <person name="Shiratori A."/>
            <person name="Sudo H."/>
            <person name="Hosoiri T."/>
            <person name="Kaku Y."/>
            <person name="Kodaira H."/>
            <person name="Kondo H."/>
            <person name="Sugawara M."/>
            <person name="Takahashi M."/>
            <person name="Kanda K."/>
            <person name="Yokoi T."/>
            <person name="Furuya T."/>
            <person name="Kikkawa E."/>
            <person name="Omura Y."/>
            <person name="Abe K."/>
            <person name="Kamihara K."/>
            <person name="Katsuta N."/>
            <person name="Sato K."/>
            <person name="Tanikawa M."/>
            <person name="Yamazaki M."/>
            <person name="Ninomiya K."/>
            <person name="Ishibashi T."/>
            <person name="Yamashita H."/>
            <person name="Murakawa K."/>
            <person name="Fujimori K."/>
            <person name="Tanai H."/>
            <person name="Kimata M."/>
            <person name="Watanabe M."/>
            <person name="Hiraoka S."/>
            <person name="Chiba Y."/>
            <person name="Ishida S."/>
            <person name="Ono Y."/>
            <person name="Takiguchi S."/>
            <person name="Watanabe S."/>
            <person name="Yosida M."/>
            <person name="Hotuta T."/>
            <person name="Kusano J."/>
            <person name="Kanehori K."/>
            <person name="Takahashi-Fujii A."/>
            <person name="Hara H."/>
            <person name="Tanase T.-O."/>
            <person name="Nomura Y."/>
            <person name="Togiya S."/>
            <person name="Komai F."/>
            <person name="Hara R."/>
            <person name="Takeuchi K."/>
            <person name="Arita M."/>
            <person name="Imose N."/>
            <person name="Musashino K."/>
            <person name="Yuuki H."/>
            <person name="Oshima A."/>
            <person name="Sasaki N."/>
            <person name="Aotsuka S."/>
            <person name="Yoshikawa Y."/>
            <person name="Matsunawa H."/>
            <person name="Ichihara T."/>
            <person name="Shiohata N."/>
            <person name="Sano S."/>
            <person name="Moriya S."/>
            <person name="Momiyama H."/>
            <person name="Satoh N."/>
            <person name="Takami S."/>
            <person name="Terashima Y."/>
            <person name="Suzuki O."/>
            <person name="Nakagawa S."/>
            <person name="Senoh A."/>
            <person name="Mizoguchi H."/>
            <person name="Goto Y."/>
            <person name="Shimizu F."/>
            <person name="Wakebe H."/>
            <person name="Hishigaki H."/>
            <person name="Watanabe T."/>
            <person name="Sugiyama A."/>
            <person name="Takemoto M."/>
            <person name="Kawakami B."/>
            <person name="Yamazaki M."/>
            <person name="Watanabe K."/>
            <person name="Kumagai A."/>
            <person name="Itakura S."/>
            <person name="Fukuzumi Y."/>
            <person name="Fujimori Y."/>
            <person name="Komiyama M."/>
            <person name="Tashiro H."/>
            <person name="Tanigami A."/>
            <person name="Fujiwara T."/>
            <person name="Ono T."/>
            <person name="Yamada K."/>
            <person name="Fujii Y."/>
            <person name="Ozaki K."/>
            <person name="Hirao M."/>
            <person name="Ohmori Y."/>
            <person name="Kawabata A."/>
            <person name="Hikiji T."/>
            <person name="Kobatake N."/>
            <person name="Inagaki H."/>
            <person name="Ikema Y."/>
            <person name="Okamoto S."/>
            <person name="Okitani R."/>
            <person name="Kawakami T."/>
            <person name="Noguchi S."/>
            <person name="Itoh T."/>
            <person name="Shigeta K."/>
            <person name="Senba T."/>
            <person name="Matsumura K."/>
            <person name="Nakajima Y."/>
            <person name="Mizuno T."/>
            <person name="Morinaga M."/>
            <person name="Sasaki M."/>
            <person name="Togashi T."/>
            <person name="Oyama M."/>
            <person name="Hata H."/>
            <person name="Watanabe M."/>
            <person name="Komatsu T."/>
            <person name="Mizushima-Sugano J."/>
            <person name="Satoh T."/>
            <person name="Shirai Y."/>
            <person name="Takahashi Y."/>
            <person name="Nakagawa K."/>
            <person name="Okumura K."/>
            <person name="Nagase T."/>
            <person name="Nomura N."/>
            <person name="Kikuchi H."/>
            <person name="Masuho Y."/>
            <person name="Yamashita R."/>
            <person name="Nakai K."/>
            <person name="Yada T."/>
            <person name="Nakamura Y."/>
            <person name="Ohara O."/>
            <person name="Isogai T."/>
            <person name="Sugano S."/>
        </authorList>
    </citation>
    <scope>NUCLEOTIDE SEQUENCE [LARGE SCALE MRNA] (ISOFORMS 1; 2; 3 AND 4)</scope>
    <scope>VARIANT SER-24</scope>
    <source>
        <tissue>Embryo</tissue>
        <tissue>Testis</tissue>
    </source>
</reference>
<reference key="2">
    <citation type="journal article" date="2006" name="Nature">
        <title>DNA sequence of human chromosome 17 and analysis of rearrangement in the human lineage.</title>
        <authorList>
            <person name="Zody M.C."/>
            <person name="Garber M."/>
            <person name="Adams D.J."/>
            <person name="Sharpe T."/>
            <person name="Harrow J."/>
            <person name="Lupski J.R."/>
            <person name="Nicholson C."/>
            <person name="Searle S.M."/>
            <person name="Wilming L."/>
            <person name="Young S.K."/>
            <person name="Abouelleil A."/>
            <person name="Allen N.R."/>
            <person name="Bi W."/>
            <person name="Bloom T."/>
            <person name="Borowsky M.L."/>
            <person name="Bugalter B.E."/>
            <person name="Butler J."/>
            <person name="Chang J.L."/>
            <person name="Chen C.-K."/>
            <person name="Cook A."/>
            <person name="Corum B."/>
            <person name="Cuomo C.A."/>
            <person name="de Jong P.J."/>
            <person name="DeCaprio D."/>
            <person name="Dewar K."/>
            <person name="FitzGerald M."/>
            <person name="Gilbert J."/>
            <person name="Gibson R."/>
            <person name="Gnerre S."/>
            <person name="Goldstein S."/>
            <person name="Grafham D.V."/>
            <person name="Grocock R."/>
            <person name="Hafez N."/>
            <person name="Hagopian D.S."/>
            <person name="Hart E."/>
            <person name="Norman C.H."/>
            <person name="Humphray S."/>
            <person name="Jaffe D.B."/>
            <person name="Jones M."/>
            <person name="Kamal M."/>
            <person name="Khodiyar V.K."/>
            <person name="LaButti K."/>
            <person name="Laird G."/>
            <person name="Lehoczky J."/>
            <person name="Liu X."/>
            <person name="Lokyitsang T."/>
            <person name="Loveland J."/>
            <person name="Lui A."/>
            <person name="Macdonald P."/>
            <person name="Major J.E."/>
            <person name="Matthews L."/>
            <person name="Mauceli E."/>
            <person name="McCarroll S.A."/>
            <person name="Mihalev A.H."/>
            <person name="Mudge J."/>
            <person name="Nguyen C."/>
            <person name="Nicol R."/>
            <person name="O'Leary S.B."/>
            <person name="Osoegawa K."/>
            <person name="Schwartz D.C."/>
            <person name="Shaw-Smith C."/>
            <person name="Stankiewicz P."/>
            <person name="Steward C."/>
            <person name="Swarbreck D."/>
            <person name="Venkataraman V."/>
            <person name="Whittaker C.A."/>
            <person name="Yang X."/>
            <person name="Zimmer A.R."/>
            <person name="Bradley A."/>
            <person name="Hubbard T."/>
            <person name="Birren B.W."/>
            <person name="Rogers J."/>
            <person name="Lander E.S."/>
            <person name="Nusbaum C."/>
        </authorList>
    </citation>
    <scope>NUCLEOTIDE SEQUENCE [LARGE SCALE GENOMIC DNA]</scope>
</reference>
<dbReference type="EMBL" id="AK021786">
    <property type="protein sequence ID" value="BAG51052.1"/>
    <property type="molecule type" value="mRNA"/>
</dbReference>
<dbReference type="EMBL" id="AK302960">
    <property type="protein sequence ID" value="BAG64111.1"/>
    <property type="molecule type" value="mRNA"/>
</dbReference>
<dbReference type="EMBL" id="AK304254">
    <property type="protein sequence ID" value="BAG65120.1"/>
    <property type="molecule type" value="mRNA"/>
</dbReference>
<dbReference type="EMBL" id="DB037384">
    <property type="status" value="NOT_ANNOTATED_CDS"/>
    <property type="molecule type" value="mRNA"/>
</dbReference>
<dbReference type="EMBL" id="AC005803">
    <property type="status" value="NOT_ANNOTATED_CDS"/>
    <property type="molecule type" value="Genomic_DNA"/>
</dbReference>
<dbReference type="CCDS" id="CCDS54157.1">
    <molecule id="P0C7W0-2"/>
</dbReference>
<dbReference type="CCDS" id="CCDS54158.1">
    <molecule id="P0C7W0-1"/>
</dbReference>
<dbReference type="CCDS" id="CCDS54159.1">
    <molecule id="P0C7W0-3"/>
</dbReference>
<dbReference type="CCDS" id="CCDS58586.1">
    <molecule id="P0C7W0-4"/>
</dbReference>
<dbReference type="RefSeq" id="NP_001157729.1">
    <molecule id="P0C7W0-1"/>
    <property type="nucleotide sequence ID" value="NM_001164257.2"/>
</dbReference>
<dbReference type="RefSeq" id="NP_001177958.1">
    <molecule id="P0C7W0-2"/>
    <property type="nucleotide sequence ID" value="NM_001191029.2"/>
</dbReference>
<dbReference type="RefSeq" id="NP_001177959.1">
    <molecule id="P0C7W0-4"/>
    <property type="nucleotide sequence ID" value="NM_001191030.2"/>
</dbReference>
<dbReference type="RefSeq" id="NP_001177960.1">
    <molecule id="P0C7W0-3"/>
    <property type="nucleotide sequence ID" value="NM_001191031.2"/>
</dbReference>
<dbReference type="FunCoup" id="P0C7W0">
    <property type="interactions" value="6"/>
</dbReference>
<dbReference type="STRING" id="9606.ENSP00000396936"/>
<dbReference type="GlyGen" id="P0C7W0">
    <property type="glycosylation" value="3 sites, 1 O-linked glycan (1 site)"/>
</dbReference>
<dbReference type="BioMuta" id="PRR29"/>
<dbReference type="MassIVE" id="P0C7W0"/>
<dbReference type="PaxDb" id="9606-ENSP00000396936"/>
<dbReference type="PeptideAtlas" id="P0C7W0"/>
<dbReference type="Antibodypedia" id="52676">
    <property type="antibodies" value="1 antibodies from 1 providers"/>
</dbReference>
<dbReference type="DNASU" id="92340"/>
<dbReference type="Ensembl" id="ENST00000412177.6">
    <molecule id="P0C7W0-1"/>
    <property type="protein sequence ID" value="ENSP00000400986.1"/>
    <property type="gene ID" value="ENSG00000224383.8"/>
</dbReference>
<dbReference type="Ensembl" id="ENST00000425164.7">
    <molecule id="P0C7W0-2"/>
    <property type="protein sequence ID" value="ENSP00000396936.3"/>
    <property type="gene ID" value="ENSG00000224383.8"/>
</dbReference>
<dbReference type="Ensembl" id="ENST00000577953.5">
    <molecule id="P0C7W0-3"/>
    <property type="protein sequence ID" value="ENSP00000463279.1"/>
    <property type="gene ID" value="ENSG00000224383.8"/>
</dbReference>
<dbReference type="Ensembl" id="ENST00000579184.5">
    <molecule id="P0C7W0-4"/>
    <property type="protein sequence ID" value="ENSP00000462097.1"/>
    <property type="gene ID" value="ENSG00000224383.8"/>
</dbReference>
<dbReference type="GeneID" id="92340"/>
<dbReference type="KEGG" id="hsa:92340"/>
<dbReference type="MANE-Select" id="ENST00000412177.6">
    <property type="protein sequence ID" value="ENSP00000400986.1"/>
    <property type="RefSeq nucleotide sequence ID" value="NM_001164257.2"/>
    <property type="RefSeq protein sequence ID" value="NP_001157729.1"/>
</dbReference>
<dbReference type="UCSC" id="uc002jdt.5">
    <molecule id="P0C7W0-1"/>
    <property type="organism name" value="human"/>
</dbReference>
<dbReference type="AGR" id="HGNC:25673"/>
<dbReference type="CTD" id="92340"/>
<dbReference type="GeneCards" id="PRR29"/>
<dbReference type="HGNC" id="HGNC:25673">
    <property type="gene designation" value="PRR29"/>
</dbReference>
<dbReference type="HPA" id="ENSG00000224383">
    <property type="expression patterns" value="Tissue enhanced (choroid plexus, fallopian tube)"/>
</dbReference>
<dbReference type="neXtProt" id="NX_P0C7W0"/>
<dbReference type="OpenTargets" id="ENSG00000224383"/>
<dbReference type="PharmGKB" id="PA142672220"/>
<dbReference type="VEuPathDB" id="HostDB:ENSG00000224383"/>
<dbReference type="eggNOG" id="ENOG502S6FU">
    <property type="taxonomic scope" value="Eukaryota"/>
</dbReference>
<dbReference type="GeneTree" id="ENSGT00390000002000"/>
<dbReference type="HOGENOM" id="CLU_2333053_0_0_1"/>
<dbReference type="InParanoid" id="P0C7W0"/>
<dbReference type="OMA" id="QVIMNNI"/>
<dbReference type="OrthoDB" id="8962708at2759"/>
<dbReference type="PAN-GO" id="P0C7W0">
    <property type="GO annotations" value="0 GO annotations based on evolutionary models"/>
</dbReference>
<dbReference type="PathwayCommons" id="P0C7W0"/>
<dbReference type="BioGRID-ORCS" id="92340">
    <property type="hits" value="6 hits in 1144 CRISPR screens"/>
</dbReference>
<dbReference type="ChiTaRS" id="PRR29">
    <property type="organism name" value="human"/>
</dbReference>
<dbReference type="GenomeRNAi" id="92340"/>
<dbReference type="Pharos" id="P0C7W0">
    <property type="development level" value="Tdark"/>
</dbReference>
<dbReference type="PRO" id="PR:P0C7W0"/>
<dbReference type="Proteomes" id="UP000005640">
    <property type="component" value="Chromosome 17"/>
</dbReference>
<dbReference type="RNAct" id="P0C7W0">
    <property type="molecule type" value="protein"/>
</dbReference>
<dbReference type="Bgee" id="ENSG00000224383">
    <property type="expression patterns" value="Expressed in right uterine tube and 149 other cell types or tissues"/>
</dbReference>
<dbReference type="ExpressionAtlas" id="P0C7W0">
    <property type="expression patterns" value="baseline and differential"/>
</dbReference>
<dbReference type="InterPro" id="IPR027904">
    <property type="entry name" value="DUF4587"/>
</dbReference>
<dbReference type="InterPro" id="IPR038915">
    <property type="entry name" value="PRR29-like"/>
</dbReference>
<dbReference type="PANTHER" id="PTHR28604">
    <property type="match status" value="1"/>
</dbReference>
<dbReference type="PANTHER" id="PTHR28604:SF1">
    <property type="entry name" value="PROLINE-RICH PROTEIN 29"/>
    <property type="match status" value="1"/>
</dbReference>
<dbReference type="Pfam" id="PF15248">
    <property type="entry name" value="DUF4587"/>
    <property type="match status" value="1"/>
</dbReference>
<accession>P0C7W0</accession>
<accession>B3KMP0</accession>
<accession>B4DZJ9</accession>
<accession>B4E2F8</accession>
<accession>E9PGL5</accession>
<accession>J3QKX4</accession>
<evidence type="ECO:0000256" key="1">
    <source>
        <dbReference type="SAM" id="MobiDB-lite"/>
    </source>
</evidence>
<evidence type="ECO:0000269" key="2">
    <source>
    </source>
</evidence>
<evidence type="ECO:0000303" key="3">
    <source>
    </source>
</evidence>
<evidence type="ECO:0000305" key="4"/>
<feature type="chain" id="PRO_0000344468" description="Proline-rich protein 29">
    <location>
        <begin position="1"/>
        <end position="189"/>
    </location>
</feature>
<feature type="region of interest" description="Disordered" evidence="1">
    <location>
        <begin position="152"/>
        <end position="189"/>
    </location>
</feature>
<feature type="splice variant" id="VSP_046997" description="In isoform 4." evidence="3">
    <location>
        <begin position="22"/>
        <end position="28"/>
    </location>
</feature>
<feature type="splice variant" id="VSP_045344" description="In isoform 3." evidence="3">
    <original>VYLEVPQEEPEEEEEEM</original>
    <variation>ESCAPTPTPQCHRDCGC</variation>
    <location>
        <begin position="82"/>
        <end position="98"/>
    </location>
</feature>
<feature type="splice variant" id="VSP_045345" description="In isoform 3." evidence="3">
    <location>
        <begin position="99"/>
        <end position="189"/>
    </location>
</feature>
<feature type="splice variant" id="VSP_045346" description="In isoform 2." evidence="3">
    <original>VRAVPPPPPPSATGTVGADVPPASDYYDAESLL</original>
    <variation>TTMMPRASYEDRPRPWELHQLPALDTAPEPPPAPLLSTPRCPWLAVLLTPSTSARPSSPGEISPCPTPMSSWTGRICAVV</variation>
    <location>
        <begin position="157"/>
        <end position="189"/>
    </location>
</feature>
<feature type="sequence variant" id="VAR_069055" description="In dbSNP:rs62070903." evidence="2">
    <original>T</original>
    <variation>S</variation>
    <location>
        <position position="24"/>
    </location>
</feature>
<feature type="sequence conflict" description="In Ref. 1; BAG51052." evidence="4" ref="1">
    <original>R</original>
    <variation>S</variation>
    <location>
        <position position="145"/>
    </location>
</feature>
<sequence length="189" mass="20715">MASGAGGSWGRSPPQSAVPTPWVTFLQPLSWAVPPAPPQPGRVKEDLLELMMLQNAQMHQLLLSRLVAGALQPRPASPCPQVYLEVPQEEPEEEEEEMDVREKGPLVFHHHYLPYLMPSPGALLPWPAPFFPTPACQPYLQDVPRIQHCPASREREVRAVPPPPPPSATGTVGADVPPASDYYDAESLL</sequence>
<proteinExistence type="evidence at protein level"/>
<organism>
    <name type="scientific">Homo sapiens</name>
    <name type="common">Human</name>
    <dbReference type="NCBI Taxonomy" id="9606"/>
    <lineage>
        <taxon>Eukaryota</taxon>
        <taxon>Metazoa</taxon>
        <taxon>Chordata</taxon>
        <taxon>Craniata</taxon>
        <taxon>Vertebrata</taxon>
        <taxon>Euteleostomi</taxon>
        <taxon>Mammalia</taxon>
        <taxon>Eutheria</taxon>
        <taxon>Euarchontoglires</taxon>
        <taxon>Primates</taxon>
        <taxon>Haplorrhini</taxon>
        <taxon>Catarrhini</taxon>
        <taxon>Hominidae</taxon>
        <taxon>Homo</taxon>
    </lineage>
</organism>
<gene>
    <name type="primary">PRR29</name>
    <name type="synonym">C17orf72</name>
</gene>
<keyword id="KW-0025">Alternative splicing</keyword>
<keyword id="KW-1267">Proteomics identification</keyword>
<keyword id="KW-1185">Reference proteome</keyword>
<protein>
    <recommendedName>
        <fullName>Proline-rich protein 29</fullName>
    </recommendedName>
</protein>
<comment type="alternative products">
    <event type="alternative splicing"/>
    <isoform>
        <id>P0C7W0-1</id>
        <name>1</name>
        <sequence type="displayed"/>
    </isoform>
    <isoform>
        <id>P0C7W0-2</id>
        <name>2</name>
        <sequence type="described" ref="VSP_045346"/>
    </isoform>
    <isoform>
        <id>P0C7W0-3</id>
        <name>3</name>
        <sequence type="described" ref="VSP_045344 VSP_045345"/>
    </isoform>
    <isoform>
        <id>P0C7W0-4</id>
        <name>4</name>
        <sequence type="described" ref="VSP_046997"/>
    </isoform>
</comment>